<evidence type="ECO:0000255" key="1">
    <source>
        <dbReference type="HAMAP-Rule" id="MF_01315"/>
    </source>
</evidence>
<evidence type="ECO:0000256" key="2">
    <source>
        <dbReference type="SAM" id="MobiDB-lite"/>
    </source>
</evidence>
<evidence type="ECO:0000305" key="3"/>
<keyword id="KW-0687">Ribonucleoprotein</keyword>
<keyword id="KW-0689">Ribosomal protein</keyword>
<keyword id="KW-0694">RNA-binding</keyword>
<keyword id="KW-0699">rRNA-binding</keyword>
<keyword id="KW-0820">tRNA-binding</keyword>
<reference key="1">
    <citation type="submission" date="2006-03" db="EMBL/GenBank/DDBJ databases">
        <title>Complete sequence of chromosome of Psychrobacter cryohalolentis K5.</title>
        <authorList>
            <consortium name="US DOE Joint Genome Institute"/>
            <person name="Copeland A."/>
            <person name="Lucas S."/>
            <person name="Lapidus A."/>
            <person name="Barry K."/>
            <person name="Detter J.C."/>
            <person name="Glavina T."/>
            <person name="Hammon N."/>
            <person name="Israni S."/>
            <person name="Dalin E."/>
            <person name="Tice H."/>
            <person name="Pitluck S."/>
            <person name="Brettin T."/>
            <person name="Bruce D."/>
            <person name="Han C."/>
            <person name="Tapia R."/>
            <person name="Sims D.R."/>
            <person name="Gilna P."/>
            <person name="Schmutz J."/>
            <person name="Larimer F."/>
            <person name="Land M."/>
            <person name="Hauser L."/>
            <person name="Kyrpides N."/>
            <person name="Kim E."/>
            <person name="Richardson P."/>
        </authorList>
    </citation>
    <scope>NUCLEOTIDE SEQUENCE [LARGE SCALE GENOMIC DNA]</scope>
    <source>
        <strain>ATCC BAA-1226 / DSM 17306 / VKM B-2378 / K5</strain>
    </source>
</reference>
<feature type="chain" id="PRO_0000306683" description="Small ribosomal subunit protein uS13">
    <location>
        <begin position="1"/>
        <end position="118"/>
    </location>
</feature>
<feature type="region of interest" description="Disordered" evidence="2">
    <location>
        <begin position="93"/>
        <end position="118"/>
    </location>
</feature>
<feature type="compositionally biased region" description="Basic residues" evidence="2">
    <location>
        <begin position="106"/>
        <end position="118"/>
    </location>
</feature>
<gene>
    <name evidence="1" type="primary">rpsM</name>
    <name type="ordered locus">Pcryo_0506</name>
</gene>
<dbReference type="EMBL" id="CP000323">
    <property type="protein sequence ID" value="ABE74289.1"/>
    <property type="molecule type" value="Genomic_DNA"/>
</dbReference>
<dbReference type="RefSeq" id="WP_011512864.1">
    <property type="nucleotide sequence ID" value="NC_007969.1"/>
</dbReference>
<dbReference type="SMR" id="Q1QDG4"/>
<dbReference type="STRING" id="335284.Pcryo_0506"/>
<dbReference type="KEGG" id="pcr:Pcryo_0506"/>
<dbReference type="eggNOG" id="COG0099">
    <property type="taxonomic scope" value="Bacteria"/>
</dbReference>
<dbReference type="HOGENOM" id="CLU_103849_1_2_6"/>
<dbReference type="Proteomes" id="UP000002425">
    <property type="component" value="Chromosome"/>
</dbReference>
<dbReference type="GO" id="GO:0005829">
    <property type="term" value="C:cytosol"/>
    <property type="evidence" value="ECO:0007669"/>
    <property type="project" value="TreeGrafter"/>
</dbReference>
<dbReference type="GO" id="GO:0015935">
    <property type="term" value="C:small ribosomal subunit"/>
    <property type="evidence" value="ECO:0007669"/>
    <property type="project" value="TreeGrafter"/>
</dbReference>
<dbReference type="GO" id="GO:0019843">
    <property type="term" value="F:rRNA binding"/>
    <property type="evidence" value="ECO:0007669"/>
    <property type="project" value="UniProtKB-UniRule"/>
</dbReference>
<dbReference type="GO" id="GO:0003735">
    <property type="term" value="F:structural constituent of ribosome"/>
    <property type="evidence" value="ECO:0007669"/>
    <property type="project" value="InterPro"/>
</dbReference>
<dbReference type="GO" id="GO:0000049">
    <property type="term" value="F:tRNA binding"/>
    <property type="evidence" value="ECO:0007669"/>
    <property type="project" value="UniProtKB-UniRule"/>
</dbReference>
<dbReference type="GO" id="GO:0006412">
    <property type="term" value="P:translation"/>
    <property type="evidence" value="ECO:0007669"/>
    <property type="project" value="UniProtKB-UniRule"/>
</dbReference>
<dbReference type="FunFam" id="1.10.8.50:FF:000001">
    <property type="entry name" value="30S ribosomal protein S13"/>
    <property type="match status" value="1"/>
</dbReference>
<dbReference type="FunFam" id="4.10.910.10:FF:000001">
    <property type="entry name" value="30S ribosomal protein S13"/>
    <property type="match status" value="1"/>
</dbReference>
<dbReference type="Gene3D" id="1.10.8.50">
    <property type="match status" value="1"/>
</dbReference>
<dbReference type="Gene3D" id="4.10.910.10">
    <property type="entry name" value="30s ribosomal protein s13, domain 2"/>
    <property type="match status" value="1"/>
</dbReference>
<dbReference type="HAMAP" id="MF_01315">
    <property type="entry name" value="Ribosomal_uS13"/>
    <property type="match status" value="1"/>
</dbReference>
<dbReference type="InterPro" id="IPR027437">
    <property type="entry name" value="Rbsml_uS13_C"/>
</dbReference>
<dbReference type="InterPro" id="IPR001892">
    <property type="entry name" value="Ribosomal_uS13"/>
</dbReference>
<dbReference type="InterPro" id="IPR010979">
    <property type="entry name" value="Ribosomal_uS13-like_H2TH"/>
</dbReference>
<dbReference type="InterPro" id="IPR019980">
    <property type="entry name" value="Ribosomal_uS13_bac-type"/>
</dbReference>
<dbReference type="InterPro" id="IPR018269">
    <property type="entry name" value="Ribosomal_uS13_CS"/>
</dbReference>
<dbReference type="NCBIfam" id="TIGR03631">
    <property type="entry name" value="uS13_bact"/>
    <property type="match status" value="1"/>
</dbReference>
<dbReference type="PANTHER" id="PTHR10871">
    <property type="entry name" value="30S RIBOSOMAL PROTEIN S13/40S RIBOSOMAL PROTEIN S18"/>
    <property type="match status" value="1"/>
</dbReference>
<dbReference type="PANTHER" id="PTHR10871:SF1">
    <property type="entry name" value="SMALL RIBOSOMAL SUBUNIT PROTEIN US13M"/>
    <property type="match status" value="1"/>
</dbReference>
<dbReference type="Pfam" id="PF00416">
    <property type="entry name" value="Ribosomal_S13"/>
    <property type="match status" value="1"/>
</dbReference>
<dbReference type="PIRSF" id="PIRSF002134">
    <property type="entry name" value="Ribosomal_S13"/>
    <property type="match status" value="1"/>
</dbReference>
<dbReference type="SUPFAM" id="SSF46946">
    <property type="entry name" value="S13-like H2TH domain"/>
    <property type="match status" value="1"/>
</dbReference>
<dbReference type="PROSITE" id="PS00646">
    <property type="entry name" value="RIBOSOMAL_S13_1"/>
    <property type="match status" value="1"/>
</dbReference>
<dbReference type="PROSITE" id="PS50159">
    <property type="entry name" value="RIBOSOMAL_S13_2"/>
    <property type="match status" value="1"/>
</dbReference>
<protein>
    <recommendedName>
        <fullName evidence="1">Small ribosomal subunit protein uS13</fullName>
    </recommendedName>
    <alternativeName>
        <fullName evidence="3">30S ribosomal protein S13</fullName>
    </alternativeName>
</protein>
<proteinExistence type="inferred from homology"/>
<organism>
    <name type="scientific">Psychrobacter cryohalolentis (strain ATCC BAA-1226 / DSM 17306 / VKM B-2378 / K5)</name>
    <dbReference type="NCBI Taxonomy" id="335284"/>
    <lineage>
        <taxon>Bacteria</taxon>
        <taxon>Pseudomonadati</taxon>
        <taxon>Pseudomonadota</taxon>
        <taxon>Gammaproteobacteria</taxon>
        <taxon>Moraxellales</taxon>
        <taxon>Moraxellaceae</taxon>
        <taxon>Psychrobacter</taxon>
    </lineage>
</organism>
<name>RS13_PSYCK</name>
<accession>Q1QDG4</accession>
<comment type="function">
    <text evidence="1">Located at the top of the head of the 30S subunit, it contacts several helices of the 16S rRNA. In the 70S ribosome it contacts the 23S rRNA (bridge B1a) and protein L5 of the 50S subunit (bridge B1b), connecting the 2 subunits; these bridges are implicated in subunit movement. Contacts the tRNAs in the A and P-sites.</text>
</comment>
<comment type="subunit">
    <text evidence="1">Part of the 30S ribosomal subunit. Forms a loose heterodimer with protein S19. Forms two bridges to the 50S subunit in the 70S ribosome.</text>
</comment>
<comment type="similarity">
    <text evidence="1">Belongs to the universal ribosomal protein uS13 family.</text>
</comment>
<sequence length="118" mass="13209">MARIAGVNIPDNKHAVISLTYIFGVGRTTAQKILEAVGIAPSTKVSQLDDTQLDAIRAQVAEYMTEGDLRREVSMNIKRLVDLGCYRGIRHRRNLPVRGQNTKNNARTRKGPTRPLKR</sequence>